<evidence type="ECO:0000250" key="1"/>
<evidence type="ECO:0000250" key="2">
    <source>
        <dbReference type="UniProtKB" id="O00445"/>
    </source>
</evidence>
<evidence type="ECO:0000255" key="3"/>
<evidence type="ECO:0000255" key="4">
    <source>
        <dbReference type="PROSITE-ProRule" id="PRU00041"/>
    </source>
</evidence>
<evidence type="ECO:0000256" key="5">
    <source>
        <dbReference type="SAM" id="MobiDB-lite"/>
    </source>
</evidence>
<evidence type="ECO:0000269" key="6">
    <source>
    </source>
</evidence>
<evidence type="ECO:0000305" key="7"/>
<comment type="function">
    <text evidence="6">May be involved in Ca(2+)-dependent exocytosis of secretory vesicles through Ca(2+) and phospholipid binding to the C2 domain or may serve as Ca(2+) sensors in the process of vesicular trafficking and exocytosis. Regulates the Ca(2+)-dependent secretion of norepinephrine in PC12 cells. Required for export from the endocytic recycling compartment to the cell surface.</text>
</comment>
<comment type="cofactor">
    <cofactor evidence="4">
        <name>Ca(2+)</name>
        <dbReference type="ChEBI" id="CHEBI:29108"/>
    </cofactor>
    <text evidence="2">Binds 3 Ca(2+) ions per subunit. The ions are bound to the C2 domains.</text>
</comment>
<comment type="subunit">
    <text evidence="1 6">Homodimer (By similarity). Interacts with both alpha- and beta-tubulin (PubMed:12966166).</text>
</comment>
<comment type="subcellular location">
    <subcellularLocation>
        <location evidence="6">Cytoplasmic vesicle</location>
        <location evidence="6">Secretory vesicle</location>
        <location evidence="6">Synaptic vesicle membrane</location>
        <topology evidence="6">Single-pass membrane protein</topology>
    </subcellularLocation>
    <subcellularLocation>
        <location evidence="6">Recycling endosome membrane</location>
        <topology evidence="6">Single-pass membrane protein</topology>
    </subcellularLocation>
    <text>In mast cells, localizes to the endocytic recycling compartment.</text>
</comment>
<comment type="tissue specificity">
    <text>Expressed in kidney, adipose tissue, lung and heart, as well as at higher levels in brain.</text>
</comment>
<comment type="similarity">
    <text evidence="7">Belongs to the synaptotagmin family.</text>
</comment>
<protein>
    <recommendedName>
        <fullName>Synaptotagmin-5</fullName>
    </recommendedName>
    <alternativeName>
        <fullName>Synaptotagmin IX</fullName>
    </alternativeName>
    <alternativeName>
        <fullName>Synaptotagmin V</fullName>
        <shortName>SytV</shortName>
    </alternativeName>
</protein>
<accession>P47861</accession>
<accession>Q56A28</accession>
<organism>
    <name type="scientific">Rattus norvegicus</name>
    <name type="common">Rat</name>
    <dbReference type="NCBI Taxonomy" id="10116"/>
    <lineage>
        <taxon>Eukaryota</taxon>
        <taxon>Metazoa</taxon>
        <taxon>Chordata</taxon>
        <taxon>Craniata</taxon>
        <taxon>Vertebrata</taxon>
        <taxon>Euteleostomi</taxon>
        <taxon>Mammalia</taxon>
        <taxon>Eutheria</taxon>
        <taxon>Euarchontoglires</taxon>
        <taxon>Glires</taxon>
        <taxon>Rodentia</taxon>
        <taxon>Myomorpha</taxon>
        <taxon>Muroidea</taxon>
        <taxon>Muridae</taxon>
        <taxon>Murinae</taxon>
        <taxon>Rattus</taxon>
    </lineage>
</organism>
<sequence length="386" mass="43127">MFPEPPTPGSPAPETPPDSSRIRQGAVPAWVLATILLGSGLLVFSSCFCLYRKRCRRRMGKKSQAQAQVHLQEVKELGRSYIDKVQPEIEELDPSPSMPGQQVLDKHQLGRLQYSLDYDFQTGQLLVGILQAEGLAALDLGGSSDPYVSVYLLPDKRRRHETKVHRQTLNPHFGETFAFKVPYVELGGRVLVMAVYDFDRFSRNDAIGEVRVPMSSVNLGRPVQAWRELQVAPKEEQEKLGDICFSLRYVPTAGKLTVIVLEAKNLKKMDVGGLSDPYVKVHLLQGGKKVRKKKTTIKKNTLNPYYNEAFSFEVPCDQVQKVQVELTVLDYDKLGKNEAIGRVAVGTAVGGAGLRHWADMLANPRRPIAQWHSLRPPDRARPIPAP</sequence>
<reference key="1">
    <citation type="journal article" date="1995" name="FEBS Lett.">
        <title>Synaptotagmin V: a novel synaptotagmin isoform expressed in rat brain.</title>
        <authorList>
            <person name="Craxton M.A."/>
            <person name="Goedert M."/>
        </authorList>
    </citation>
    <scope>NUCLEOTIDE SEQUENCE [MRNA]</scope>
    <source>
        <strain>Sprague-Dawley</strain>
        <tissue>Brain</tissue>
    </source>
</reference>
<reference key="2">
    <citation type="journal article" date="1995" name="Proc. Natl. Acad. Sci. U.S.A.">
        <title>Identification of a nonneuronal isoform of synaptotagmin.</title>
        <authorList>
            <person name="Hudson A.W."/>
            <person name="Birnbaum M.J."/>
        </authorList>
    </citation>
    <scope>NUCLEOTIDE SEQUENCE [MRNA]</scope>
</reference>
<reference key="3">
    <citation type="journal article" date="2004" name="Genome Res.">
        <title>The status, quality, and expansion of the NIH full-length cDNA project: the Mammalian Gene Collection (MGC).</title>
        <authorList>
            <consortium name="The MGC Project Team"/>
        </authorList>
    </citation>
    <scope>NUCLEOTIDE SEQUENCE [LARGE SCALE MRNA]</scope>
    <source>
        <tissue>Brain</tissue>
    </source>
</reference>
<reference key="4">
    <citation type="journal article" date="2003" name="J. Cell Sci.">
        <title>Synaptotagmin IX, a possible linker between the perinuclear endocytic recycling compartment and the microtubules.</title>
        <authorList>
            <person name="Haberman Y."/>
            <person name="Grimberg E."/>
            <person name="Fukuda M."/>
            <person name="Sagi-Eisenberg R."/>
        </authorList>
    </citation>
    <scope>FUNCTION</scope>
    <scope>SUBCELLULAR LOCATION</scope>
    <scope>INTERACTION WITH TUBULIN</scope>
</reference>
<feature type="chain" id="PRO_0000183953" description="Synaptotagmin-5">
    <location>
        <begin position="1"/>
        <end position="386"/>
    </location>
</feature>
<feature type="topological domain" description="Vesicular" evidence="3">
    <location>
        <begin position="1"/>
        <end position="24"/>
    </location>
</feature>
<feature type="transmembrane region" description="Helical" evidence="3">
    <location>
        <begin position="25"/>
        <end position="45"/>
    </location>
</feature>
<feature type="topological domain" description="Cytoplasmic" evidence="3">
    <location>
        <begin position="46"/>
        <end position="386"/>
    </location>
</feature>
<feature type="domain" description="C2 1" evidence="4">
    <location>
        <begin position="108"/>
        <end position="227"/>
    </location>
</feature>
<feature type="domain" description="C2 2" evidence="4">
    <location>
        <begin position="239"/>
        <end position="372"/>
    </location>
</feature>
<feature type="region of interest" description="Disordered" evidence="5">
    <location>
        <begin position="1"/>
        <end position="21"/>
    </location>
</feature>
<feature type="compositionally biased region" description="Pro residues" evidence="5">
    <location>
        <begin position="1"/>
        <end position="16"/>
    </location>
</feature>
<feature type="binding site" evidence="4">
    <location>
        <position position="138"/>
    </location>
    <ligand>
        <name>Ca(2+)</name>
        <dbReference type="ChEBI" id="CHEBI:29108"/>
        <label>2</label>
    </ligand>
</feature>
<feature type="binding site" evidence="4">
    <location>
        <position position="139"/>
    </location>
    <ligand>
        <name>Ca(2+)</name>
        <dbReference type="ChEBI" id="CHEBI:29108"/>
        <label>1</label>
    </ligand>
</feature>
<feature type="binding site" evidence="4">
    <location>
        <position position="139"/>
    </location>
    <ligand>
        <name>Ca(2+)</name>
        <dbReference type="ChEBI" id="CHEBI:29108"/>
        <label>2</label>
    </ligand>
</feature>
<feature type="binding site" evidence="4">
    <location>
        <position position="145"/>
    </location>
    <ligand>
        <name>Ca(2+)</name>
        <dbReference type="ChEBI" id="CHEBI:29108"/>
        <label>1</label>
    </ligand>
</feature>
<feature type="binding site" evidence="4">
    <location>
        <position position="197"/>
    </location>
    <ligand>
        <name>Ca(2+)</name>
        <dbReference type="ChEBI" id="CHEBI:29108"/>
        <label>1</label>
    </ligand>
</feature>
<feature type="binding site" evidence="4">
    <location>
        <position position="197"/>
    </location>
    <ligand>
        <name>Ca(2+)</name>
        <dbReference type="ChEBI" id="CHEBI:29108"/>
        <label>2</label>
    </ligand>
</feature>
<feature type="binding site" evidence="4">
    <location>
        <position position="198"/>
    </location>
    <ligand>
        <name>Ca(2+)</name>
        <dbReference type="ChEBI" id="CHEBI:29108"/>
        <label>1</label>
    </ligand>
</feature>
<feature type="binding site" evidence="4">
    <location>
        <position position="199"/>
    </location>
    <ligand>
        <name>Ca(2+)</name>
        <dbReference type="ChEBI" id="CHEBI:29108"/>
        <label>1</label>
    </ligand>
</feature>
<feature type="binding site" evidence="4">
    <location>
        <position position="199"/>
    </location>
    <ligand>
        <name>Ca(2+)</name>
        <dbReference type="ChEBI" id="CHEBI:29108"/>
        <label>2</label>
    </ligand>
</feature>
<feature type="binding site" evidence="4">
    <location>
        <position position="199"/>
    </location>
    <ligand>
        <name>Ca(2+)</name>
        <dbReference type="ChEBI" id="CHEBI:29108"/>
        <label>3</label>
    </ligand>
</feature>
<feature type="binding site" evidence="4">
    <location>
        <position position="202"/>
    </location>
    <ligand>
        <name>Ca(2+)</name>
        <dbReference type="ChEBI" id="CHEBI:29108"/>
        <label>3</label>
    </ligand>
</feature>
<feature type="binding site" evidence="4">
    <location>
        <position position="205"/>
    </location>
    <ligand>
        <name>Ca(2+)</name>
        <dbReference type="ChEBI" id="CHEBI:29108"/>
        <label>2</label>
    </ligand>
</feature>
<feature type="binding site" evidence="4">
    <location>
        <position position="205"/>
    </location>
    <ligand>
        <name>Ca(2+)</name>
        <dbReference type="ChEBI" id="CHEBI:29108"/>
        <label>3</label>
    </ligand>
</feature>
<feature type="binding site" evidence="4">
    <location>
        <position position="270"/>
    </location>
    <ligand>
        <name>Ca(2+)</name>
        <dbReference type="ChEBI" id="CHEBI:29108"/>
        <label>4</label>
    </ligand>
</feature>
<feature type="binding site" evidence="4">
    <location>
        <position position="276"/>
    </location>
    <ligand>
        <name>Ca(2+)</name>
        <dbReference type="ChEBI" id="CHEBI:29108"/>
        <label>4</label>
    </ligand>
</feature>
<feature type="binding site" evidence="4">
    <location>
        <position position="330"/>
    </location>
    <ligand>
        <name>Ca(2+)</name>
        <dbReference type="ChEBI" id="CHEBI:29108"/>
        <label>4</label>
    </ligand>
</feature>
<feature type="binding site" evidence="4">
    <location>
        <position position="332"/>
    </location>
    <ligand>
        <name>Ca(2+)</name>
        <dbReference type="ChEBI" id="CHEBI:29108"/>
        <label>4</label>
    </ligand>
</feature>
<feature type="sequence variant">
    <original>P</original>
    <variation>S</variation>
    <location>
        <position position="182"/>
    </location>
</feature>
<feature type="sequence variant">
    <location>
        <position position="237"/>
    </location>
</feature>
<name>SYT5_RAT</name>
<proteinExistence type="evidence at protein level"/>
<keyword id="KW-0106">Calcium</keyword>
<keyword id="KW-0968">Cytoplasmic vesicle</keyword>
<keyword id="KW-0967">Endosome</keyword>
<keyword id="KW-0472">Membrane</keyword>
<keyword id="KW-0479">Metal-binding</keyword>
<keyword id="KW-1185">Reference proteome</keyword>
<keyword id="KW-0677">Repeat</keyword>
<keyword id="KW-0770">Synapse</keyword>
<keyword id="KW-0812">Transmembrane</keyword>
<keyword id="KW-1133">Transmembrane helix</keyword>
<gene>
    <name type="primary">Syt5</name>
</gene>
<dbReference type="EMBL" id="X84884">
    <property type="protein sequence ID" value="CAA59311.1"/>
    <property type="molecule type" value="mRNA"/>
</dbReference>
<dbReference type="EMBL" id="U26402">
    <property type="protein sequence ID" value="AAA81382.1"/>
    <property type="molecule type" value="mRNA"/>
</dbReference>
<dbReference type="EMBL" id="BC092198">
    <property type="protein sequence ID" value="AAH92198.1"/>
    <property type="molecule type" value="mRNA"/>
</dbReference>
<dbReference type="PIR" id="I59387">
    <property type="entry name" value="I59387"/>
</dbReference>
<dbReference type="RefSeq" id="NP_062223.1">
    <property type="nucleotide sequence ID" value="NM_019350.2"/>
</dbReference>
<dbReference type="RefSeq" id="XP_017445103.1">
    <property type="nucleotide sequence ID" value="XM_017589614.1"/>
</dbReference>
<dbReference type="RefSeq" id="XP_017445104.1">
    <property type="nucleotide sequence ID" value="XM_017589615.1"/>
</dbReference>
<dbReference type="SMR" id="P47861"/>
<dbReference type="BioGRID" id="248527">
    <property type="interactions" value="1"/>
</dbReference>
<dbReference type="FunCoup" id="P47861">
    <property type="interactions" value="630"/>
</dbReference>
<dbReference type="STRING" id="10116.ENSRNOP00000024547"/>
<dbReference type="GlyGen" id="P47861">
    <property type="glycosylation" value="1 site"/>
</dbReference>
<dbReference type="iPTMnet" id="P47861"/>
<dbReference type="PhosphoSitePlus" id="P47861"/>
<dbReference type="jPOST" id="P47861"/>
<dbReference type="PaxDb" id="10116-ENSRNOP00000024547"/>
<dbReference type="Ensembl" id="ENSRNOT00000024547.5">
    <property type="protein sequence ID" value="ENSRNOP00000024547.4"/>
    <property type="gene ID" value="ENSRNOG00000018217.5"/>
</dbReference>
<dbReference type="GeneID" id="54309"/>
<dbReference type="KEGG" id="rno:54309"/>
<dbReference type="UCSC" id="RGD:3806">
    <property type="organism name" value="rat"/>
</dbReference>
<dbReference type="AGR" id="RGD:3806"/>
<dbReference type="CTD" id="6861"/>
<dbReference type="RGD" id="3806">
    <property type="gene designation" value="Syt5"/>
</dbReference>
<dbReference type="eggNOG" id="KOG1028">
    <property type="taxonomic scope" value="Eukaryota"/>
</dbReference>
<dbReference type="GeneTree" id="ENSGT00940000161816"/>
<dbReference type="HOGENOM" id="CLU_023008_0_1_1"/>
<dbReference type="InParanoid" id="P47861"/>
<dbReference type="OMA" id="CCFCVYR"/>
<dbReference type="OrthoDB" id="67700at2759"/>
<dbReference type="PhylomeDB" id="P47861"/>
<dbReference type="TreeFam" id="TF315600"/>
<dbReference type="PRO" id="PR:P47861"/>
<dbReference type="Proteomes" id="UP000002494">
    <property type="component" value="Chromosome 1"/>
</dbReference>
<dbReference type="Bgee" id="ENSRNOG00000018217">
    <property type="expression patterns" value="Expressed in frontal cortex and 17 other cell types or tissues"/>
</dbReference>
<dbReference type="GO" id="GO:0030424">
    <property type="term" value="C:axon"/>
    <property type="evidence" value="ECO:0000318"/>
    <property type="project" value="GO_Central"/>
</dbReference>
<dbReference type="GO" id="GO:0031045">
    <property type="term" value="C:dense core granule"/>
    <property type="evidence" value="ECO:0000266"/>
    <property type="project" value="RGD"/>
</dbReference>
<dbReference type="GO" id="GO:0070382">
    <property type="term" value="C:exocytic vesicle"/>
    <property type="evidence" value="ECO:0000318"/>
    <property type="project" value="GO_Central"/>
</dbReference>
<dbReference type="GO" id="GO:0043005">
    <property type="term" value="C:neuron projection"/>
    <property type="evidence" value="ECO:0000266"/>
    <property type="project" value="RGD"/>
</dbReference>
<dbReference type="GO" id="GO:0043025">
    <property type="term" value="C:neuronal cell body"/>
    <property type="evidence" value="ECO:0000266"/>
    <property type="project" value="RGD"/>
</dbReference>
<dbReference type="GO" id="GO:0099012">
    <property type="term" value="C:neuronal dense core vesicle membrane"/>
    <property type="evidence" value="ECO:0000266"/>
    <property type="project" value="RGD"/>
</dbReference>
<dbReference type="GO" id="GO:0048471">
    <property type="term" value="C:perinuclear region of cytoplasm"/>
    <property type="evidence" value="ECO:0000266"/>
    <property type="project" value="RGD"/>
</dbReference>
<dbReference type="GO" id="GO:0005886">
    <property type="term" value="C:plasma membrane"/>
    <property type="evidence" value="ECO:0000318"/>
    <property type="project" value="GO_Central"/>
</dbReference>
<dbReference type="GO" id="GO:1990769">
    <property type="term" value="C:proximal neuron projection"/>
    <property type="evidence" value="ECO:0000266"/>
    <property type="project" value="RGD"/>
</dbReference>
<dbReference type="GO" id="GO:0055038">
    <property type="term" value="C:recycling endosome membrane"/>
    <property type="evidence" value="ECO:0007669"/>
    <property type="project" value="UniProtKB-SubCell"/>
</dbReference>
<dbReference type="GO" id="GO:0030672">
    <property type="term" value="C:synaptic vesicle membrane"/>
    <property type="evidence" value="ECO:0000318"/>
    <property type="project" value="GO_Central"/>
</dbReference>
<dbReference type="GO" id="GO:0005509">
    <property type="term" value="F:calcium ion binding"/>
    <property type="evidence" value="ECO:0000250"/>
    <property type="project" value="UniProtKB"/>
</dbReference>
<dbReference type="GO" id="GO:0061891">
    <property type="term" value="F:calcium ion sensor activity"/>
    <property type="evidence" value="ECO:0000318"/>
    <property type="project" value="GO_Central"/>
</dbReference>
<dbReference type="GO" id="GO:0005544">
    <property type="term" value="F:calcium-dependent phospholipid binding"/>
    <property type="evidence" value="ECO:0000314"/>
    <property type="project" value="BHF-UCL"/>
</dbReference>
<dbReference type="GO" id="GO:0030276">
    <property type="term" value="F:clathrin binding"/>
    <property type="evidence" value="ECO:0000314"/>
    <property type="project" value="BHF-UCL"/>
</dbReference>
<dbReference type="GO" id="GO:0005546">
    <property type="term" value="F:phosphatidylinositol-4,5-bisphosphate binding"/>
    <property type="evidence" value="ECO:0000266"/>
    <property type="project" value="RGD"/>
</dbReference>
<dbReference type="GO" id="GO:0001786">
    <property type="term" value="F:phosphatidylserine binding"/>
    <property type="evidence" value="ECO:0000266"/>
    <property type="project" value="RGD"/>
</dbReference>
<dbReference type="GO" id="GO:0046982">
    <property type="term" value="F:protein heterodimerization activity"/>
    <property type="evidence" value="ECO:0000266"/>
    <property type="project" value="RGD"/>
</dbReference>
<dbReference type="GO" id="GO:0000149">
    <property type="term" value="F:SNARE binding"/>
    <property type="evidence" value="ECO:0000266"/>
    <property type="project" value="RGD"/>
</dbReference>
<dbReference type="GO" id="GO:0019905">
    <property type="term" value="F:syntaxin binding"/>
    <property type="evidence" value="ECO:0000314"/>
    <property type="project" value="BHF-UCL"/>
</dbReference>
<dbReference type="GO" id="GO:0099502">
    <property type="term" value="P:calcium-dependent activation of synaptic vesicle fusion"/>
    <property type="evidence" value="ECO:0000318"/>
    <property type="project" value="GO_Central"/>
</dbReference>
<dbReference type="GO" id="GO:0017156">
    <property type="term" value="P:calcium-ion regulated exocytosis"/>
    <property type="evidence" value="ECO:0000303"/>
    <property type="project" value="RGD"/>
</dbReference>
<dbReference type="GO" id="GO:0017158">
    <property type="term" value="P:regulation of calcium ion-dependent exocytosis"/>
    <property type="evidence" value="ECO:0000266"/>
    <property type="project" value="RGD"/>
</dbReference>
<dbReference type="GO" id="GO:2000300">
    <property type="term" value="P:regulation of synaptic vesicle exocytosis"/>
    <property type="evidence" value="ECO:0000318"/>
    <property type="project" value="GO_Central"/>
</dbReference>
<dbReference type="GO" id="GO:0016192">
    <property type="term" value="P:vesicle-mediated transport"/>
    <property type="evidence" value="ECO:0000318"/>
    <property type="project" value="GO_Central"/>
</dbReference>
<dbReference type="CDD" id="cd08385">
    <property type="entry name" value="C2A_Synaptotagmin-1-5-6-9-10"/>
    <property type="match status" value="1"/>
</dbReference>
<dbReference type="CDD" id="cd08402">
    <property type="entry name" value="C2B_Synaptotagmin-1"/>
    <property type="match status" value="1"/>
</dbReference>
<dbReference type="FunFam" id="2.60.40.150:FF:000007">
    <property type="entry name" value="Synaptotagmin 1"/>
    <property type="match status" value="1"/>
</dbReference>
<dbReference type="FunFam" id="2.60.40.150:FF:000111">
    <property type="entry name" value="synaptotagmin-5 isoform X1"/>
    <property type="match status" value="1"/>
</dbReference>
<dbReference type="Gene3D" id="2.60.40.150">
    <property type="entry name" value="C2 domain"/>
    <property type="match status" value="2"/>
</dbReference>
<dbReference type="InterPro" id="IPR000008">
    <property type="entry name" value="C2_dom"/>
</dbReference>
<dbReference type="InterPro" id="IPR035892">
    <property type="entry name" value="C2_domain_sf"/>
</dbReference>
<dbReference type="InterPro" id="IPR001565">
    <property type="entry name" value="Synaptotagmin"/>
</dbReference>
<dbReference type="PANTHER" id="PTHR10024">
    <property type="entry name" value="SYNAPTOTAGMIN"/>
    <property type="match status" value="1"/>
</dbReference>
<dbReference type="PANTHER" id="PTHR10024:SF282">
    <property type="entry name" value="SYNAPTOTAGMIN-5"/>
    <property type="match status" value="1"/>
</dbReference>
<dbReference type="Pfam" id="PF00168">
    <property type="entry name" value="C2"/>
    <property type="match status" value="2"/>
</dbReference>
<dbReference type="PRINTS" id="PR00360">
    <property type="entry name" value="C2DOMAIN"/>
</dbReference>
<dbReference type="PRINTS" id="PR00399">
    <property type="entry name" value="SYNAPTOTAGMN"/>
</dbReference>
<dbReference type="SMART" id="SM00239">
    <property type="entry name" value="C2"/>
    <property type="match status" value="2"/>
</dbReference>
<dbReference type="SUPFAM" id="SSF49562">
    <property type="entry name" value="C2 domain (Calcium/lipid-binding domain, CaLB)"/>
    <property type="match status" value="2"/>
</dbReference>
<dbReference type="PROSITE" id="PS50004">
    <property type="entry name" value="C2"/>
    <property type="match status" value="2"/>
</dbReference>